<accession>C3MBV9</accession>
<sequence>MQVIETLAEGLKRELKVVIPADEMQTRMNERLADVKDRVRINGFRPGKVPVAHLKKVYGKSIMAELVNEIVRDKPTEILTSRGEKSATQPEVAMTEDEAEADKILKAEADFEFTLAYEIIPAIELKDATGIKVTREVVEIAEDEVNEQILRIAESARTYESKKGKAANGDRVTIDYLGKVDGVAFDGGKDEDAELVLGSNRFIPGFEEQLVGVKAGDEKTITVTFPADYPAANLAGKEATFDITVKDVAAAAPIEINDELATKLGLESADKLKEIVRGQIESQYGSVTRQKVKRQLLDQLDELYQFETPERLVNAEFENIWRQINTDLEQAGKTFADEDTTEEEARAEYRKLAERRVRLGLVLSEIGEKAGVQVSDDEMQRSLFEQLRQFPGQEKQILDYFKNTPGAAASLRAPLFEEKVVDHLLSEVAVTDKTVSKDELMAEDEAEDKPAKKAPAKKKAAAKAEAGEGEEAAAPKKKAPAKKKAADDSAE</sequence>
<reference key="1">
    <citation type="journal article" date="2009" name="Appl. Environ. Microbiol.">
        <title>Rhizobium sp. strain NGR234 possesses a remarkable number of secretion systems.</title>
        <authorList>
            <person name="Schmeisser C."/>
            <person name="Liesegang H."/>
            <person name="Krysciak D."/>
            <person name="Bakkou N."/>
            <person name="Le Quere A."/>
            <person name="Wollherr A."/>
            <person name="Heinemeyer I."/>
            <person name="Morgenstern B."/>
            <person name="Pommerening-Roeser A."/>
            <person name="Flores M."/>
            <person name="Palacios R."/>
            <person name="Brenner S."/>
            <person name="Gottschalk G."/>
            <person name="Schmitz R.A."/>
            <person name="Broughton W.J."/>
            <person name="Perret X."/>
            <person name="Strittmatter A.W."/>
            <person name="Streit W.R."/>
        </authorList>
    </citation>
    <scope>NUCLEOTIDE SEQUENCE [LARGE SCALE GENOMIC DNA]</scope>
    <source>
        <strain>NBRC 101917 / NGR234</strain>
    </source>
</reference>
<comment type="function">
    <text evidence="1">Involved in protein export. Acts as a chaperone by maintaining the newly synthesized protein in an open conformation. Functions as a peptidyl-prolyl cis-trans isomerase.</text>
</comment>
<comment type="catalytic activity">
    <reaction evidence="1">
        <text>[protein]-peptidylproline (omega=180) = [protein]-peptidylproline (omega=0)</text>
        <dbReference type="Rhea" id="RHEA:16237"/>
        <dbReference type="Rhea" id="RHEA-COMP:10747"/>
        <dbReference type="Rhea" id="RHEA-COMP:10748"/>
        <dbReference type="ChEBI" id="CHEBI:83833"/>
        <dbReference type="ChEBI" id="CHEBI:83834"/>
        <dbReference type="EC" id="5.2.1.8"/>
    </reaction>
</comment>
<comment type="subcellular location">
    <subcellularLocation>
        <location>Cytoplasm</location>
    </subcellularLocation>
    <text evidence="1">About half TF is bound to the ribosome near the polypeptide exit tunnel while the other half is free in the cytoplasm.</text>
</comment>
<comment type="domain">
    <text evidence="1">Consists of 3 domains; the N-terminus binds the ribosome, the middle domain has PPIase activity, while the C-terminus has intrinsic chaperone activity on its own.</text>
</comment>
<comment type="similarity">
    <text evidence="1">Belongs to the FKBP-type PPIase family. Tig subfamily.</text>
</comment>
<proteinExistence type="inferred from homology"/>
<evidence type="ECO:0000255" key="1">
    <source>
        <dbReference type="HAMAP-Rule" id="MF_00303"/>
    </source>
</evidence>
<evidence type="ECO:0000256" key="2">
    <source>
        <dbReference type="SAM" id="MobiDB-lite"/>
    </source>
</evidence>
<keyword id="KW-0131">Cell cycle</keyword>
<keyword id="KW-0132">Cell division</keyword>
<keyword id="KW-0143">Chaperone</keyword>
<keyword id="KW-0963">Cytoplasm</keyword>
<keyword id="KW-0413">Isomerase</keyword>
<keyword id="KW-1185">Reference proteome</keyword>
<keyword id="KW-0697">Rotamase</keyword>
<protein>
    <recommendedName>
        <fullName evidence="1">Trigger factor</fullName>
        <shortName evidence="1">TF</shortName>
        <ecNumber evidence="1">5.2.1.8</ecNumber>
    </recommendedName>
    <alternativeName>
        <fullName evidence="1">PPIase</fullName>
    </alternativeName>
</protein>
<dbReference type="EC" id="5.2.1.8" evidence="1"/>
<dbReference type="EMBL" id="CP001389">
    <property type="protein sequence ID" value="ACP25171.1"/>
    <property type="molecule type" value="Genomic_DNA"/>
</dbReference>
<dbReference type="RefSeq" id="WP_012707945.1">
    <property type="nucleotide sequence ID" value="NC_012587.1"/>
</dbReference>
<dbReference type="RefSeq" id="YP_002825924.1">
    <property type="nucleotide sequence ID" value="NC_012587.1"/>
</dbReference>
<dbReference type="SMR" id="C3MBV9"/>
<dbReference type="STRING" id="394.NGR_c13920"/>
<dbReference type="KEGG" id="rhi:NGR_c13920"/>
<dbReference type="PATRIC" id="fig|394.7.peg.4213"/>
<dbReference type="eggNOG" id="COG0544">
    <property type="taxonomic scope" value="Bacteria"/>
</dbReference>
<dbReference type="HOGENOM" id="CLU_033058_2_2_5"/>
<dbReference type="OrthoDB" id="9767721at2"/>
<dbReference type="Proteomes" id="UP000001054">
    <property type="component" value="Chromosome"/>
</dbReference>
<dbReference type="GO" id="GO:0005737">
    <property type="term" value="C:cytoplasm"/>
    <property type="evidence" value="ECO:0007669"/>
    <property type="project" value="UniProtKB-SubCell"/>
</dbReference>
<dbReference type="GO" id="GO:0003755">
    <property type="term" value="F:peptidyl-prolyl cis-trans isomerase activity"/>
    <property type="evidence" value="ECO:0007669"/>
    <property type="project" value="UniProtKB-UniRule"/>
</dbReference>
<dbReference type="GO" id="GO:0044183">
    <property type="term" value="F:protein folding chaperone"/>
    <property type="evidence" value="ECO:0007669"/>
    <property type="project" value="TreeGrafter"/>
</dbReference>
<dbReference type="GO" id="GO:0043022">
    <property type="term" value="F:ribosome binding"/>
    <property type="evidence" value="ECO:0007669"/>
    <property type="project" value="TreeGrafter"/>
</dbReference>
<dbReference type="GO" id="GO:0051083">
    <property type="term" value="P:'de novo' cotranslational protein folding"/>
    <property type="evidence" value="ECO:0007669"/>
    <property type="project" value="TreeGrafter"/>
</dbReference>
<dbReference type="GO" id="GO:0051301">
    <property type="term" value="P:cell division"/>
    <property type="evidence" value="ECO:0007669"/>
    <property type="project" value="UniProtKB-KW"/>
</dbReference>
<dbReference type="GO" id="GO:0061077">
    <property type="term" value="P:chaperone-mediated protein folding"/>
    <property type="evidence" value="ECO:0007669"/>
    <property type="project" value="TreeGrafter"/>
</dbReference>
<dbReference type="GO" id="GO:0015031">
    <property type="term" value="P:protein transport"/>
    <property type="evidence" value="ECO:0007669"/>
    <property type="project" value="UniProtKB-UniRule"/>
</dbReference>
<dbReference type="GO" id="GO:0043335">
    <property type="term" value="P:protein unfolding"/>
    <property type="evidence" value="ECO:0007669"/>
    <property type="project" value="TreeGrafter"/>
</dbReference>
<dbReference type="FunFam" id="3.10.50.40:FF:000001">
    <property type="entry name" value="Trigger factor"/>
    <property type="match status" value="1"/>
</dbReference>
<dbReference type="Gene3D" id="3.10.50.40">
    <property type="match status" value="1"/>
</dbReference>
<dbReference type="Gene3D" id="3.30.70.1050">
    <property type="entry name" value="Trigger factor ribosome-binding domain"/>
    <property type="match status" value="1"/>
</dbReference>
<dbReference type="Gene3D" id="1.10.3120.10">
    <property type="entry name" value="Trigger factor, C-terminal domain"/>
    <property type="match status" value="1"/>
</dbReference>
<dbReference type="HAMAP" id="MF_00303">
    <property type="entry name" value="Trigger_factor_Tig"/>
    <property type="match status" value="1"/>
</dbReference>
<dbReference type="InterPro" id="IPR046357">
    <property type="entry name" value="PPIase_dom_sf"/>
</dbReference>
<dbReference type="InterPro" id="IPR001179">
    <property type="entry name" value="PPIase_FKBP_dom"/>
</dbReference>
<dbReference type="InterPro" id="IPR005215">
    <property type="entry name" value="Trig_fac"/>
</dbReference>
<dbReference type="InterPro" id="IPR008880">
    <property type="entry name" value="Trigger_fac_C"/>
</dbReference>
<dbReference type="InterPro" id="IPR037041">
    <property type="entry name" value="Trigger_fac_C_sf"/>
</dbReference>
<dbReference type="InterPro" id="IPR008881">
    <property type="entry name" value="Trigger_fac_ribosome-bd_bac"/>
</dbReference>
<dbReference type="InterPro" id="IPR036611">
    <property type="entry name" value="Trigger_fac_ribosome-bd_sf"/>
</dbReference>
<dbReference type="InterPro" id="IPR027304">
    <property type="entry name" value="Trigger_fact/SurA_dom_sf"/>
</dbReference>
<dbReference type="NCBIfam" id="TIGR00115">
    <property type="entry name" value="tig"/>
    <property type="match status" value="1"/>
</dbReference>
<dbReference type="PANTHER" id="PTHR30560">
    <property type="entry name" value="TRIGGER FACTOR CHAPERONE AND PEPTIDYL-PROLYL CIS/TRANS ISOMERASE"/>
    <property type="match status" value="1"/>
</dbReference>
<dbReference type="PANTHER" id="PTHR30560:SF3">
    <property type="entry name" value="TRIGGER FACTOR-LIKE PROTEIN TIG, CHLOROPLASTIC"/>
    <property type="match status" value="1"/>
</dbReference>
<dbReference type="Pfam" id="PF00254">
    <property type="entry name" value="FKBP_C"/>
    <property type="match status" value="1"/>
</dbReference>
<dbReference type="Pfam" id="PF05698">
    <property type="entry name" value="Trigger_C"/>
    <property type="match status" value="1"/>
</dbReference>
<dbReference type="Pfam" id="PF05697">
    <property type="entry name" value="Trigger_N"/>
    <property type="match status" value="1"/>
</dbReference>
<dbReference type="PIRSF" id="PIRSF003095">
    <property type="entry name" value="Trigger_factor"/>
    <property type="match status" value="1"/>
</dbReference>
<dbReference type="SUPFAM" id="SSF54534">
    <property type="entry name" value="FKBP-like"/>
    <property type="match status" value="1"/>
</dbReference>
<dbReference type="SUPFAM" id="SSF109998">
    <property type="entry name" value="Triger factor/SurA peptide-binding domain-like"/>
    <property type="match status" value="1"/>
</dbReference>
<dbReference type="SUPFAM" id="SSF102735">
    <property type="entry name" value="Trigger factor ribosome-binding domain"/>
    <property type="match status" value="1"/>
</dbReference>
<dbReference type="PROSITE" id="PS50059">
    <property type="entry name" value="FKBP_PPIASE"/>
    <property type="match status" value="1"/>
</dbReference>
<organism>
    <name type="scientific">Sinorhizobium fredii (strain NBRC 101917 / NGR234)</name>
    <dbReference type="NCBI Taxonomy" id="394"/>
    <lineage>
        <taxon>Bacteria</taxon>
        <taxon>Pseudomonadati</taxon>
        <taxon>Pseudomonadota</taxon>
        <taxon>Alphaproteobacteria</taxon>
        <taxon>Hyphomicrobiales</taxon>
        <taxon>Rhizobiaceae</taxon>
        <taxon>Sinorhizobium/Ensifer group</taxon>
        <taxon>Sinorhizobium</taxon>
    </lineage>
</organism>
<gene>
    <name evidence="1" type="primary">tig</name>
    <name type="ordered locus">NGR_c13920</name>
</gene>
<feature type="chain" id="PRO_1000198171" description="Trigger factor">
    <location>
        <begin position="1"/>
        <end position="491"/>
    </location>
</feature>
<feature type="domain" description="PPIase FKBP-type" evidence="1">
    <location>
        <begin position="169"/>
        <end position="254"/>
    </location>
</feature>
<feature type="region of interest" description="Disordered" evidence="2">
    <location>
        <begin position="433"/>
        <end position="491"/>
    </location>
</feature>
<feature type="compositionally biased region" description="Basic residues" evidence="2">
    <location>
        <begin position="452"/>
        <end position="461"/>
    </location>
</feature>
<name>TIG_SINFN</name>